<sequence length="194" mass="20804">MTAVQLIVGLGNPGPEYDQTRHNAGALFVERLAHAQGVSLVADRKYFGLVGKFSHQGKDVRLLIPTTYMNRSGQSVAALAGFFRIAPDAILVAHDELDMPPGVAKLKTGGGHGGHNGLRDIIAQLGNQNSFHRLRLGIGHPGHSSLVSGYVLGRAPRSEQELLDTSIDFALGVLPEMLAGDWTRAMQKLHSQKA</sequence>
<comment type="function">
    <text evidence="1">Hydrolyzes ribosome-free peptidyl-tRNAs (with 1 or more amino acids incorporated), which drop off the ribosome during protein synthesis, or as a result of ribosome stalling.</text>
</comment>
<comment type="function">
    <text evidence="1">Catalyzes the release of premature peptidyl moieties from peptidyl-tRNA molecules trapped in stalled 50S ribosomal subunits, and thus maintains levels of free tRNAs and 50S ribosomes.</text>
</comment>
<comment type="catalytic activity">
    <reaction evidence="1">
        <text>an N-acyl-L-alpha-aminoacyl-tRNA + H2O = an N-acyl-L-amino acid + a tRNA + H(+)</text>
        <dbReference type="Rhea" id="RHEA:54448"/>
        <dbReference type="Rhea" id="RHEA-COMP:10123"/>
        <dbReference type="Rhea" id="RHEA-COMP:13883"/>
        <dbReference type="ChEBI" id="CHEBI:15377"/>
        <dbReference type="ChEBI" id="CHEBI:15378"/>
        <dbReference type="ChEBI" id="CHEBI:59874"/>
        <dbReference type="ChEBI" id="CHEBI:78442"/>
        <dbReference type="ChEBI" id="CHEBI:138191"/>
        <dbReference type="EC" id="3.1.1.29"/>
    </reaction>
</comment>
<comment type="subunit">
    <text evidence="1">Monomer.</text>
</comment>
<comment type="subcellular location">
    <subcellularLocation>
        <location evidence="1">Cytoplasm</location>
    </subcellularLocation>
</comment>
<comment type="similarity">
    <text evidence="1">Belongs to the PTH family.</text>
</comment>
<dbReference type="EC" id="3.1.1.29" evidence="1"/>
<dbReference type="EMBL" id="FM209186">
    <property type="protein sequence ID" value="CAW29812.1"/>
    <property type="molecule type" value="Genomic_DNA"/>
</dbReference>
<dbReference type="RefSeq" id="WP_003099278.1">
    <property type="nucleotide sequence ID" value="NC_011770.1"/>
</dbReference>
<dbReference type="SMR" id="B7V0L8"/>
<dbReference type="KEGG" id="pag:PLES_50581"/>
<dbReference type="HOGENOM" id="CLU_062456_3_1_6"/>
<dbReference type="GO" id="GO:0005737">
    <property type="term" value="C:cytoplasm"/>
    <property type="evidence" value="ECO:0007669"/>
    <property type="project" value="UniProtKB-SubCell"/>
</dbReference>
<dbReference type="GO" id="GO:0004045">
    <property type="term" value="F:peptidyl-tRNA hydrolase activity"/>
    <property type="evidence" value="ECO:0007669"/>
    <property type="project" value="UniProtKB-UniRule"/>
</dbReference>
<dbReference type="GO" id="GO:0000049">
    <property type="term" value="F:tRNA binding"/>
    <property type="evidence" value="ECO:0007669"/>
    <property type="project" value="UniProtKB-UniRule"/>
</dbReference>
<dbReference type="GO" id="GO:0006515">
    <property type="term" value="P:protein quality control for misfolded or incompletely synthesized proteins"/>
    <property type="evidence" value="ECO:0007669"/>
    <property type="project" value="UniProtKB-UniRule"/>
</dbReference>
<dbReference type="GO" id="GO:0072344">
    <property type="term" value="P:rescue of stalled ribosome"/>
    <property type="evidence" value="ECO:0007669"/>
    <property type="project" value="UniProtKB-UniRule"/>
</dbReference>
<dbReference type="CDD" id="cd00462">
    <property type="entry name" value="PTH"/>
    <property type="match status" value="1"/>
</dbReference>
<dbReference type="FunFam" id="3.40.50.1470:FF:000001">
    <property type="entry name" value="Peptidyl-tRNA hydrolase"/>
    <property type="match status" value="1"/>
</dbReference>
<dbReference type="Gene3D" id="3.40.50.1470">
    <property type="entry name" value="Peptidyl-tRNA hydrolase"/>
    <property type="match status" value="1"/>
</dbReference>
<dbReference type="HAMAP" id="MF_00083">
    <property type="entry name" value="Pept_tRNA_hydro_bact"/>
    <property type="match status" value="1"/>
</dbReference>
<dbReference type="InterPro" id="IPR001328">
    <property type="entry name" value="Pept_tRNA_hydro"/>
</dbReference>
<dbReference type="InterPro" id="IPR018171">
    <property type="entry name" value="Pept_tRNA_hydro_CS"/>
</dbReference>
<dbReference type="InterPro" id="IPR036416">
    <property type="entry name" value="Pept_tRNA_hydro_sf"/>
</dbReference>
<dbReference type="NCBIfam" id="TIGR00447">
    <property type="entry name" value="pth"/>
    <property type="match status" value="1"/>
</dbReference>
<dbReference type="PANTHER" id="PTHR17224">
    <property type="entry name" value="PEPTIDYL-TRNA HYDROLASE"/>
    <property type="match status" value="1"/>
</dbReference>
<dbReference type="PANTHER" id="PTHR17224:SF1">
    <property type="entry name" value="PEPTIDYL-TRNA HYDROLASE"/>
    <property type="match status" value="1"/>
</dbReference>
<dbReference type="Pfam" id="PF01195">
    <property type="entry name" value="Pept_tRNA_hydro"/>
    <property type="match status" value="1"/>
</dbReference>
<dbReference type="SUPFAM" id="SSF53178">
    <property type="entry name" value="Peptidyl-tRNA hydrolase-like"/>
    <property type="match status" value="1"/>
</dbReference>
<dbReference type="PROSITE" id="PS01195">
    <property type="entry name" value="PEPT_TRNA_HYDROL_1"/>
    <property type="match status" value="1"/>
</dbReference>
<dbReference type="PROSITE" id="PS01196">
    <property type="entry name" value="PEPT_TRNA_HYDROL_2"/>
    <property type="match status" value="1"/>
</dbReference>
<gene>
    <name evidence="1" type="primary">pth</name>
    <name type="ordered locus">PLES_50581</name>
</gene>
<name>PTH_PSEA8</name>
<keyword id="KW-0963">Cytoplasm</keyword>
<keyword id="KW-0378">Hydrolase</keyword>
<keyword id="KW-0694">RNA-binding</keyword>
<keyword id="KW-0820">tRNA-binding</keyword>
<proteinExistence type="inferred from homology"/>
<organism>
    <name type="scientific">Pseudomonas aeruginosa (strain LESB58)</name>
    <dbReference type="NCBI Taxonomy" id="557722"/>
    <lineage>
        <taxon>Bacteria</taxon>
        <taxon>Pseudomonadati</taxon>
        <taxon>Pseudomonadota</taxon>
        <taxon>Gammaproteobacteria</taxon>
        <taxon>Pseudomonadales</taxon>
        <taxon>Pseudomonadaceae</taxon>
        <taxon>Pseudomonas</taxon>
    </lineage>
</organism>
<protein>
    <recommendedName>
        <fullName evidence="1">Peptidyl-tRNA hydrolase</fullName>
        <shortName evidence="1">Pth</shortName>
        <ecNumber evidence="1">3.1.1.29</ecNumber>
    </recommendedName>
</protein>
<feature type="chain" id="PRO_1000192973" description="Peptidyl-tRNA hydrolase">
    <location>
        <begin position="1"/>
        <end position="194"/>
    </location>
</feature>
<feature type="active site" description="Proton acceptor" evidence="1">
    <location>
        <position position="22"/>
    </location>
</feature>
<feature type="binding site" evidence="1">
    <location>
        <position position="17"/>
    </location>
    <ligand>
        <name>tRNA</name>
        <dbReference type="ChEBI" id="CHEBI:17843"/>
    </ligand>
</feature>
<feature type="binding site" evidence="1">
    <location>
        <position position="68"/>
    </location>
    <ligand>
        <name>tRNA</name>
        <dbReference type="ChEBI" id="CHEBI:17843"/>
    </ligand>
</feature>
<feature type="binding site" evidence="1">
    <location>
        <position position="70"/>
    </location>
    <ligand>
        <name>tRNA</name>
        <dbReference type="ChEBI" id="CHEBI:17843"/>
    </ligand>
</feature>
<feature type="binding site" evidence="1">
    <location>
        <position position="116"/>
    </location>
    <ligand>
        <name>tRNA</name>
        <dbReference type="ChEBI" id="CHEBI:17843"/>
    </ligand>
</feature>
<feature type="site" description="Discriminates between blocked and unblocked aminoacyl-tRNA" evidence="1">
    <location>
        <position position="12"/>
    </location>
</feature>
<feature type="site" description="Stabilizes the basic form of H active site to accept a proton" evidence="1">
    <location>
        <position position="95"/>
    </location>
</feature>
<reference key="1">
    <citation type="journal article" date="2009" name="Genome Res.">
        <title>Newly introduced genomic prophage islands are critical determinants of in vivo competitiveness in the Liverpool epidemic strain of Pseudomonas aeruginosa.</title>
        <authorList>
            <person name="Winstanley C."/>
            <person name="Langille M.G.I."/>
            <person name="Fothergill J.L."/>
            <person name="Kukavica-Ibrulj I."/>
            <person name="Paradis-Bleau C."/>
            <person name="Sanschagrin F."/>
            <person name="Thomson N.R."/>
            <person name="Winsor G.L."/>
            <person name="Quail M.A."/>
            <person name="Lennard N."/>
            <person name="Bignell A."/>
            <person name="Clarke L."/>
            <person name="Seeger K."/>
            <person name="Saunders D."/>
            <person name="Harris D."/>
            <person name="Parkhill J."/>
            <person name="Hancock R.E.W."/>
            <person name="Brinkman F.S.L."/>
            <person name="Levesque R.C."/>
        </authorList>
    </citation>
    <scope>NUCLEOTIDE SEQUENCE [LARGE SCALE GENOMIC DNA]</scope>
    <source>
        <strain>LESB58</strain>
    </source>
</reference>
<accession>B7V0L8</accession>
<evidence type="ECO:0000255" key="1">
    <source>
        <dbReference type="HAMAP-Rule" id="MF_00083"/>
    </source>
</evidence>